<name>PETD_ORYSI</name>
<evidence type="ECO:0000250" key="1"/>
<evidence type="ECO:0000255" key="2">
    <source>
        <dbReference type="HAMAP-Rule" id="MF_01344"/>
    </source>
</evidence>
<feature type="chain" id="PRO_0000288630" description="Cytochrome b6-f complex subunit 4">
    <location>
        <begin position="1"/>
        <end position="160"/>
    </location>
</feature>
<feature type="transmembrane region" description="Helical" evidence="2">
    <location>
        <begin position="36"/>
        <end position="56"/>
    </location>
</feature>
<feature type="transmembrane region" description="Helical" evidence="2">
    <location>
        <begin position="95"/>
        <end position="115"/>
    </location>
</feature>
<feature type="transmembrane region" description="Helical" evidence="2">
    <location>
        <begin position="131"/>
        <end position="151"/>
    </location>
</feature>
<dbReference type="EMBL" id="AY522329">
    <property type="protein sequence ID" value="AAS46074.1"/>
    <property type="status" value="ALT_SEQ"/>
    <property type="molecule type" value="Genomic_DNA"/>
</dbReference>
<dbReference type="RefSeq" id="YP_654234.2">
    <property type="nucleotide sequence ID" value="NC_008155.1"/>
</dbReference>
<dbReference type="SMR" id="P0C318"/>
<dbReference type="STRING" id="39946.P0C318"/>
<dbReference type="GeneID" id="4126897"/>
<dbReference type="Proteomes" id="UP000007015">
    <property type="component" value="Chloroplast"/>
</dbReference>
<dbReference type="GO" id="GO:0009535">
    <property type="term" value="C:chloroplast thylakoid membrane"/>
    <property type="evidence" value="ECO:0007669"/>
    <property type="project" value="UniProtKB-SubCell"/>
</dbReference>
<dbReference type="GO" id="GO:0009536">
    <property type="term" value="C:plastid"/>
    <property type="evidence" value="ECO:0000305"/>
    <property type="project" value="Gramene"/>
</dbReference>
<dbReference type="GO" id="GO:0045158">
    <property type="term" value="F:electron transporter, transferring electrons within cytochrome b6/f complex of photosystem II activity"/>
    <property type="evidence" value="ECO:0007669"/>
    <property type="project" value="UniProtKB-UniRule"/>
</dbReference>
<dbReference type="GO" id="GO:0045156">
    <property type="term" value="F:electron transporter, transferring electrons within the cyclic electron transport pathway of photosynthesis activity"/>
    <property type="evidence" value="ECO:0007669"/>
    <property type="project" value="InterPro"/>
</dbReference>
<dbReference type="GO" id="GO:0016491">
    <property type="term" value="F:oxidoreductase activity"/>
    <property type="evidence" value="ECO:0007669"/>
    <property type="project" value="InterPro"/>
</dbReference>
<dbReference type="GO" id="GO:0009767">
    <property type="term" value="P:photosynthetic electron transport chain"/>
    <property type="evidence" value="ECO:0007669"/>
    <property type="project" value="InterPro"/>
</dbReference>
<dbReference type="CDD" id="cd00290">
    <property type="entry name" value="cytochrome_b_C"/>
    <property type="match status" value="1"/>
</dbReference>
<dbReference type="FunFam" id="1.10.287.980:FF:000001">
    <property type="entry name" value="Cytochrome b6-f complex subunit 4"/>
    <property type="match status" value="1"/>
</dbReference>
<dbReference type="FunFam" id="1.20.5.510:FF:000002">
    <property type="entry name" value="Cytochrome b6-f complex subunit 4"/>
    <property type="match status" value="1"/>
</dbReference>
<dbReference type="Gene3D" id="1.10.287.980">
    <property type="entry name" value="plastocyanin oxidoreductase"/>
    <property type="match status" value="1"/>
</dbReference>
<dbReference type="Gene3D" id="1.20.5.510">
    <property type="entry name" value="Single helix bin"/>
    <property type="match status" value="1"/>
</dbReference>
<dbReference type="HAMAP" id="MF_01344">
    <property type="entry name" value="Cytb6_f_subIV"/>
    <property type="match status" value="1"/>
</dbReference>
<dbReference type="InterPro" id="IPR005798">
    <property type="entry name" value="Cyt_b/b6_C"/>
</dbReference>
<dbReference type="InterPro" id="IPR036150">
    <property type="entry name" value="Cyt_b/b6_C_sf"/>
</dbReference>
<dbReference type="InterPro" id="IPR005870">
    <property type="entry name" value="Cyt_b6/f_cplx_suIV"/>
</dbReference>
<dbReference type="InterPro" id="IPR048260">
    <property type="entry name" value="Cytochrome_b_C_euk/bac"/>
</dbReference>
<dbReference type="NCBIfam" id="TIGR01156">
    <property type="entry name" value="cytb6_f_IV"/>
    <property type="match status" value="1"/>
</dbReference>
<dbReference type="PANTHER" id="PTHR19271">
    <property type="entry name" value="CYTOCHROME B"/>
    <property type="match status" value="1"/>
</dbReference>
<dbReference type="PANTHER" id="PTHR19271:SF40">
    <property type="entry name" value="CYTOCHROME B"/>
    <property type="match status" value="1"/>
</dbReference>
<dbReference type="Pfam" id="PF00032">
    <property type="entry name" value="Cytochrom_B_C"/>
    <property type="match status" value="1"/>
</dbReference>
<dbReference type="PIRSF" id="PIRSF000033">
    <property type="entry name" value="B6f_17K"/>
    <property type="match status" value="1"/>
</dbReference>
<dbReference type="SUPFAM" id="SSF81648">
    <property type="entry name" value="a domain/subunit of cytochrome bc1 complex (Ubiquinol-cytochrome c reductase)"/>
    <property type="match status" value="1"/>
</dbReference>
<dbReference type="PROSITE" id="PS51003">
    <property type="entry name" value="CYTB_CTER"/>
    <property type="match status" value="1"/>
</dbReference>
<proteinExistence type="inferred from homology"/>
<gene>
    <name evidence="2" type="primary">petD</name>
    <name type="ORF">9311097</name>
</gene>
<sequence>MGVTKKPDLNDPVLRAKLAKGMGHNYYGEPAWPNDLLYIFPVVILGTIACNVGLAVLEPSMIGEPADPFATPLEILPEWYFFPVFQILRTVPNKLLGVLLMVSVPTGLLTVPFLENVNKFQNPFRRPVATTVFLIGTAVALWLGIGATLPIEKSLTLGLF</sequence>
<keyword id="KW-0150">Chloroplast</keyword>
<keyword id="KW-0249">Electron transport</keyword>
<keyword id="KW-0472">Membrane</keyword>
<keyword id="KW-0602">Photosynthesis</keyword>
<keyword id="KW-0934">Plastid</keyword>
<keyword id="KW-1185">Reference proteome</keyword>
<keyword id="KW-0793">Thylakoid</keyword>
<keyword id="KW-0812">Transmembrane</keyword>
<keyword id="KW-1133">Transmembrane helix</keyword>
<keyword id="KW-0813">Transport</keyword>
<geneLocation type="chloroplast"/>
<accession>P0C318</accession>
<accession>P12118</accession>
<accession>Q6QXZ1</accession>
<accession>Q6QY55</accession>
<reference key="1">
    <citation type="journal article" date="2004" name="Plant Physiol.">
        <title>A comparison of rice chloroplast genomes.</title>
        <authorList>
            <person name="Tang J."/>
            <person name="Xia H."/>
            <person name="Cao M."/>
            <person name="Zhang X."/>
            <person name="Zeng W."/>
            <person name="Hu S."/>
            <person name="Tong W."/>
            <person name="Wang J."/>
            <person name="Wang J."/>
            <person name="Yu J."/>
            <person name="Yang H."/>
            <person name="Zhu L."/>
        </authorList>
    </citation>
    <scope>NUCLEOTIDE SEQUENCE [LARGE SCALE GENOMIC DNA]</scope>
    <source>
        <strain>cv. 93-11</strain>
    </source>
</reference>
<comment type="function">
    <text evidence="2">Component of the cytochrome b6-f complex, which mediates electron transfer between photosystem II (PSII) and photosystem I (PSI), cyclic electron flow around PSI, and state transitions.</text>
</comment>
<comment type="subunit">
    <text evidence="1">The 4 large subunits of the cytochrome b6-f complex are cytochrome b6, subunit IV (17 kDa polypeptide, petD), cytochrome f and the Rieske protein, while the 4 small subunits are petG, petL, petM and petN. The complex functions as a dimer (By similarity).</text>
</comment>
<comment type="subcellular location">
    <subcellularLocation>
        <location evidence="2">Plastid</location>
        <location evidence="2">Chloroplast thylakoid membrane</location>
        <topology evidence="2">Multi-pass membrane protein</topology>
    </subcellularLocation>
</comment>
<comment type="miscellaneous">
    <text>A longer mRNA that is not produced by splicing has been shown to be transcribed in barley and maize; it can also be predicted for rice. It is not known if this mRNA is translated.</text>
</comment>
<comment type="similarity">
    <text evidence="2">Belongs to the cytochrome b family. PetD subfamily.</text>
</comment>
<protein>
    <recommendedName>
        <fullName evidence="2">Cytochrome b6-f complex subunit 4</fullName>
    </recommendedName>
    <alternativeName>
        <fullName evidence="2">17 kDa polypeptide</fullName>
    </alternativeName>
</protein>
<organism>
    <name type="scientific">Oryza sativa subsp. indica</name>
    <name type="common">Rice</name>
    <dbReference type="NCBI Taxonomy" id="39946"/>
    <lineage>
        <taxon>Eukaryota</taxon>
        <taxon>Viridiplantae</taxon>
        <taxon>Streptophyta</taxon>
        <taxon>Embryophyta</taxon>
        <taxon>Tracheophyta</taxon>
        <taxon>Spermatophyta</taxon>
        <taxon>Magnoliopsida</taxon>
        <taxon>Liliopsida</taxon>
        <taxon>Poales</taxon>
        <taxon>Poaceae</taxon>
        <taxon>BOP clade</taxon>
        <taxon>Oryzoideae</taxon>
        <taxon>Oryzeae</taxon>
        <taxon>Oryzinae</taxon>
        <taxon>Oryza</taxon>
        <taxon>Oryza sativa</taxon>
    </lineage>
</organism>